<reference key="1">
    <citation type="journal article" date="2001" name="Infect. Immun.">
        <title>Silencing and reactivation of urease in Yersinia pestis is determined by one G residue at a specific position in the ureD gene.</title>
        <authorList>
            <person name="Sebbane F."/>
            <person name="Devalckenaere A."/>
            <person name="Foulon J."/>
            <person name="Carniel E."/>
            <person name="Simonet M."/>
        </authorList>
    </citation>
    <scope>NUCLEOTIDE SEQUENCE [GENOMIC DNA]</scope>
    <scope>LACK OF ROLE IN VIRULENCE</scope>
    <source>
        <strain>6/69M</strain>
    </source>
</reference>
<reference key="2">
    <citation type="journal article" date="2001" name="Nature">
        <title>Genome sequence of Yersinia pestis, the causative agent of plague.</title>
        <authorList>
            <person name="Parkhill J."/>
            <person name="Wren B.W."/>
            <person name="Thomson N.R."/>
            <person name="Titball R.W."/>
            <person name="Holden M.T.G."/>
            <person name="Prentice M.B."/>
            <person name="Sebaihia M."/>
            <person name="James K.D."/>
            <person name="Churcher C.M."/>
            <person name="Mungall K.L."/>
            <person name="Baker S."/>
            <person name="Basham D."/>
            <person name="Bentley S.D."/>
            <person name="Brooks K."/>
            <person name="Cerdeno-Tarraga A.-M."/>
            <person name="Chillingworth T."/>
            <person name="Cronin A."/>
            <person name="Davies R.M."/>
            <person name="Davis P."/>
            <person name="Dougan G."/>
            <person name="Feltwell T."/>
            <person name="Hamlin N."/>
            <person name="Holroyd S."/>
            <person name="Jagels K."/>
            <person name="Karlyshev A.V."/>
            <person name="Leather S."/>
            <person name="Moule S."/>
            <person name="Oyston P.C.F."/>
            <person name="Quail M.A."/>
            <person name="Rutherford K.M."/>
            <person name="Simmonds M."/>
            <person name="Skelton J."/>
            <person name="Stevens K."/>
            <person name="Whitehead S."/>
            <person name="Barrell B.G."/>
        </authorList>
    </citation>
    <scope>NUCLEOTIDE SEQUENCE [LARGE SCALE GENOMIC DNA]</scope>
    <source>
        <strain>CO-92 / Biovar Orientalis</strain>
    </source>
</reference>
<reference key="3">
    <citation type="journal article" date="2002" name="J. Bacteriol.">
        <title>Genome sequence of Yersinia pestis KIM.</title>
        <authorList>
            <person name="Deng W."/>
            <person name="Burland V."/>
            <person name="Plunkett G. III"/>
            <person name="Boutin A."/>
            <person name="Mayhew G.F."/>
            <person name="Liss P."/>
            <person name="Perna N.T."/>
            <person name="Rose D.J."/>
            <person name="Mau B."/>
            <person name="Zhou S."/>
            <person name="Schwartz D.C."/>
            <person name="Fetherston J.D."/>
            <person name="Lindler L.E."/>
            <person name="Brubaker R.R."/>
            <person name="Plano G.V."/>
            <person name="Straley S.C."/>
            <person name="McDonough K.A."/>
            <person name="Nilles M.L."/>
            <person name="Matson J.S."/>
            <person name="Blattner F.R."/>
            <person name="Perry R.D."/>
        </authorList>
    </citation>
    <scope>NUCLEOTIDE SEQUENCE [LARGE SCALE GENOMIC DNA]</scope>
    <source>
        <strain>KIM10+ / Biovar Mediaevalis</strain>
    </source>
</reference>
<reference key="4">
    <citation type="journal article" date="2004" name="DNA Res.">
        <title>Complete genome sequence of Yersinia pestis strain 91001, an isolate avirulent to humans.</title>
        <authorList>
            <person name="Song Y."/>
            <person name="Tong Z."/>
            <person name="Wang J."/>
            <person name="Wang L."/>
            <person name="Guo Z."/>
            <person name="Han Y."/>
            <person name="Zhang J."/>
            <person name="Pei D."/>
            <person name="Zhou D."/>
            <person name="Qin H."/>
            <person name="Pang X."/>
            <person name="Han Y."/>
            <person name="Zhai J."/>
            <person name="Li M."/>
            <person name="Cui B."/>
            <person name="Qi Z."/>
            <person name="Jin L."/>
            <person name="Dai R."/>
            <person name="Chen F."/>
            <person name="Li S."/>
            <person name="Ye C."/>
            <person name="Du Z."/>
            <person name="Lin W."/>
            <person name="Wang J."/>
            <person name="Yu J."/>
            <person name="Yang H."/>
            <person name="Wang J."/>
            <person name="Huang P."/>
            <person name="Yang R."/>
        </authorList>
    </citation>
    <scope>NUCLEOTIDE SEQUENCE [LARGE SCALE GENOMIC DNA]</scope>
    <source>
        <strain>91001 / Biovar Mediaevalis</strain>
    </source>
</reference>
<gene>
    <name evidence="1" type="primary">ureB</name>
    <name type="synonym">yeuB</name>
    <name type="ordered locus">YPO2666</name>
    <name type="ordered locus">y1238</name>
    <name type="ordered locus">YP_2467</name>
</gene>
<organism>
    <name type="scientific">Yersinia pestis</name>
    <dbReference type="NCBI Taxonomy" id="632"/>
    <lineage>
        <taxon>Bacteria</taxon>
        <taxon>Pseudomonadati</taxon>
        <taxon>Pseudomonadota</taxon>
        <taxon>Gammaproteobacteria</taxon>
        <taxon>Enterobacterales</taxon>
        <taxon>Yersiniaceae</taxon>
        <taxon>Yersinia</taxon>
    </lineage>
</organism>
<keyword id="KW-0963">Cytoplasm</keyword>
<keyword id="KW-0378">Hydrolase</keyword>
<keyword id="KW-1185">Reference proteome</keyword>
<comment type="catalytic activity">
    <reaction evidence="1">
        <text>urea + 2 H2O + H(+) = hydrogencarbonate + 2 NH4(+)</text>
        <dbReference type="Rhea" id="RHEA:20557"/>
        <dbReference type="ChEBI" id="CHEBI:15377"/>
        <dbReference type="ChEBI" id="CHEBI:15378"/>
        <dbReference type="ChEBI" id="CHEBI:16199"/>
        <dbReference type="ChEBI" id="CHEBI:17544"/>
        <dbReference type="ChEBI" id="CHEBI:28938"/>
        <dbReference type="EC" id="3.5.1.5"/>
    </reaction>
</comment>
<comment type="pathway">
    <text evidence="1">Nitrogen metabolism; urea degradation; CO(2) and NH(3) from urea (urease route): step 1/1.</text>
</comment>
<comment type="subunit">
    <text evidence="1">Heterotrimer of UreA (gamma), UreB (beta) and UreC (alpha) subunits. Three heterotrimers associate to form the active enzyme.</text>
</comment>
<comment type="subcellular location">
    <subcellularLocation>
        <location evidence="1">Cytoplasm</location>
    </subcellularLocation>
</comment>
<comment type="similarity">
    <text evidence="1">Belongs to the urease beta subunit family.</text>
</comment>
<comment type="caution">
    <text evidence="3">The last gene of this probable operon, ureD, gives rise to a truncated protein. Absence of ureD prevents expression of active urease. Correction of the mutation does not effect virulence in mice in any detectable fashion, suggesting urease is not important in the virulence of Y.pestis (PubMed:11119503).</text>
</comment>
<comment type="sequence caution" evidence="2">
    <conflict type="erroneous initiation">
        <sequence resource="EMBL-CDS" id="AAM84813"/>
    </conflict>
</comment>
<comment type="sequence caution" evidence="2">
    <conflict type="erroneous initiation">
        <sequence resource="EMBL-CDS" id="AAS62667"/>
    </conflict>
</comment>
<evidence type="ECO:0000255" key="1">
    <source>
        <dbReference type="HAMAP-Rule" id="MF_01954"/>
    </source>
</evidence>
<evidence type="ECO:0000305" key="2"/>
<evidence type="ECO:0000305" key="3">
    <source>
    </source>
</evidence>
<feature type="chain" id="PRO_0000067599" description="Urease subunit beta">
    <location>
        <begin position="1"/>
        <end position="144"/>
    </location>
</feature>
<proteinExistence type="inferred from homology"/>
<name>URE2_YERPE</name>
<dbReference type="EC" id="3.5.1.5" evidence="1"/>
<dbReference type="EMBL" id="AF095636">
    <property type="protein sequence ID" value="AAC78633.1"/>
    <property type="molecule type" value="Genomic_DNA"/>
</dbReference>
<dbReference type="EMBL" id="AL590842">
    <property type="protein sequence ID" value="CAL21285.1"/>
    <property type="molecule type" value="Genomic_DNA"/>
</dbReference>
<dbReference type="EMBL" id="AE009952">
    <property type="protein sequence ID" value="AAM84813.1"/>
    <property type="status" value="ALT_INIT"/>
    <property type="molecule type" value="Genomic_DNA"/>
</dbReference>
<dbReference type="EMBL" id="AE017042">
    <property type="protein sequence ID" value="AAS62667.1"/>
    <property type="status" value="ALT_INIT"/>
    <property type="molecule type" value="Genomic_DNA"/>
</dbReference>
<dbReference type="PIR" id="AB0325">
    <property type="entry name" value="AB0325"/>
</dbReference>
<dbReference type="RefSeq" id="WP_002212228.1">
    <property type="nucleotide sequence ID" value="NZ_WUCM01000006.1"/>
</dbReference>
<dbReference type="RefSeq" id="YP_002347615.1">
    <property type="nucleotide sequence ID" value="NC_003143.1"/>
</dbReference>
<dbReference type="SMR" id="P69990"/>
<dbReference type="STRING" id="214092.YPO2666"/>
<dbReference type="PaxDb" id="214092-YPO2666"/>
<dbReference type="DNASU" id="1146185"/>
<dbReference type="EnsemblBacteria" id="AAS62667">
    <property type="protein sequence ID" value="AAS62667"/>
    <property type="gene ID" value="YP_2467"/>
</dbReference>
<dbReference type="GeneID" id="57976028"/>
<dbReference type="KEGG" id="ype:YPO2666"/>
<dbReference type="KEGG" id="ypj:CH55_1505"/>
<dbReference type="KEGG" id="ypk:y1238"/>
<dbReference type="KEGG" id="ypl:CH46_2443"/>
<dbReference type="KEGG" id="ypm:YP_2467"/>
<dbReference type="KEGG" id="ypv:BZ15_867"/>
<dbReference type="KEGG" id="ypw:CH59_3546"/>
<dbReference type="PATRIC" id="fig|214092.21.peg.3100"/>
<dbReference type="eggNOG" id="COG0832">
    <property type="taxonomic scope" value="Bacteria"/>
</dbReference>
<dbReference type="HOGENOM" id="CLU_129707_2_0_6"/>
<dbReference type="UniPathway" id="UPA00258">
    <property type="reaction ID" value="UER00370"/>
</dbReference>
<dbReference type="Proteomes" id="UP000000815">
    <property type="component" value="Chromosome"/>
</dbReference>
<dbReference type="Proteomes" id="UP000001019">
    <property type="component" value="Chromosome"/>
</dbReference>
<dbReference type="Proteomes" id="UP000002490">
    <property type="component" value="Chromosome"/>
</dbReference>
<dbReference type="GO" id="GO:0035550">
    <property type="term" value="C:urease complex"/>
    <property type="evidence" value="ECO:0007669"/>
    <property type="project" value="InterPro"/>
</dbReference>
<dbReference type="GO" id="GO:0009039">
    <property type="term" value="F:urease activity"/>
    <property type="evidence" value="ECO:0000318"/>
    <property type="project" value="GO_Central"/>
</dbReference>
<dbReference type="GO" id="GO:0043419">
    <property type="term" value="P:urea catabolic process"/>
    <property type="evidence" value="ECO:0000318"/>
    <property type="project" value="GO_Central"/>
</dbReference>
<dbReference type="CDD" id="cd00407">
    <property type="entry name" value="Urease_beta"/>
    <property type="match status" value="1"/>
</dbReference>
<dbReference type="Gene3D" id="2.10.150.10">
    <property type="entry name" value="Urease, beta subunit"/>
    <property type="match status" value="1"/>
</dbReference>
<dbReference type="HAMAP" id="MF_01954">
    <property type="entry name" value="Urease_beta"/>
    <property type="match status" value="1"/>
</dbReference>
<dbReference type="InterPro" id="IPR002019">
    <property type="entry name" value="Urease_beta-like"/>
</dbReference>
<dbReference type="InterPro" id="IPR036461">
    <property type="entry name" value="Urease_betasu_sf"/>
</dbReference>
<dbReference type="InterPro" id="IPR050069">
    <property type="entry name" value="Urease_subunit"/>
</dbReference>
<dbReference type="NCBIfam" id="NF009682">
    <property type="entry name" value="PRK13203.1"/>
    <property type="match status" value="1"/>
</dbReference>
<dbReference type="NCBIfam" id="TIGR00192">
    <property type="entry name" value="urease_beta"/>
    <property type="match status" value="1"/>
</dbReference>
<dbReference type="PANTHER" id="PTHR33569">
    <property type="entry name" value="UREASE"/>
    <property type="match status" value="1"/>
</dbReference>
<dbReference type="PANTHER" id="PTHR33569:SF1">
    <property type="entry name" value="UREASE"/>
    <property type="match status" value="1"/>
</dbReference>
<dbReference type="Pfam" id="PF00699">
    <property type="entry name" value="Urease_beta"/>
    <property type="match status" value="1"/>
</dbReference>
<dbReference type="SUPFAM" id="SSF51278">
    <property type="entry name" value="Urease, beta-subunit"/>
    <property type="match status" value="1"/>
</dbReference>
<accession>P69990</accession>
<accession>P52314</accession>
<accession>Q0WDM3</accession>
<accession>Q667P9</accession>
<protein>
    <recommendedName>
        <fullName evidence="1">Urease subunit beta</fullName>
        <ecNumber evidence="1">3.5.1.5</ecNumber>
    </recommendedName>
    <alternativeName>
        <fullName evidence="1">Urea amidohydrolase subunit beta</fullName>
    </alternativeName>
</protein>
<sequence length="144" mass="15822">MSAKKSTKDSKEQNTPLGGLVLAETPITFNENKPVTKVKVRNTGDRPIQVGSHFHFFEVNRALEFDRAAAYGKRLNISSTTAIRFEPGDETEVPLIPFGGKQTLYGFNNLVDGWTGEGVVPNSERPDKLAAIRLAAERGFKSSK</sequence>